<organism>
    <name type="scientific">Trachelium caeruleum</name>
    <name type="common">Blue throatwort</name>
    <dbReference type="NCBI Taxonomy" id="28494"/>
    <lineage>
        <taxon>Eukaryota</taxon>
        <taxon>Viridiplantae</taxon>
        <taxon>Streptophyta</taxon>
        <taxon>Embryophyta</taxon>
        <taxon>Tracheophyta</taxon>
        <taxon>Spermatophyta</taxon>
        <taxon>Magnoliopsida</taxon>
        <taxon>eudicotyledons</taxon>
        <taxon>Gunneridae</taxon>
        <taxon>Pentapetalae</taxon>
        <taxon>asterids</taxon>
        <taxon>campanulids</taxon>
        <taxon>Asterales</taxon>
        <taxon>Campanulaceae</taxon>
        <taxon>Trachelium</taxon>
    </lineage>
</organism>
<feature type="chain" id="PRO_0000355526" description="Large ribosomal subunit protein bL20c">
    <location>
        <begin position="1"/>
        <end position="128"/>
    </location>
</feature>
<dbReference type="EMBL" id="EU017221">
    <property type="protein sequence ID" value="ABU85632.1"/>
    <property type="molecule type" value="Genomic_DNA"/>
</dbReference>
<dbReference type="EMBL" id="EU090187">
    <property type="protein sequence ID" value="ABV26488.1"/>
    <property type="molecule type" value="Genomic_DNA"/>
</dbReference>
<dbReference type="RefSeq" id="YP_001718663.1">
    <property type="nucleotide sequence ID" value="NC_010442.1"/>
</dbReference>
<dbReference type="SMR" id="A9QC39"/>
<dbReference type="GeneID" id="6155880"/>
<dbReference type="GO" id="GO:0009507">
    <property type="term" value="C:chloroplast"/>
    <property type="evidence" value="ECO:0007669"/>
    <property type="project" value="UniProtKB-SubCell"/>
</dbReference>
<dbReference type="GO" id="GO:1990904">
    <property type="term" value="C:ribonucleoprotein complex"/>
    <property type="evidence" value="ECO:0007669"/>
    <property type="project" value="UniProtKB-KW"/>
</dbReference>
<dbReference type="GO" id="GO:0005840">
    <property type="term" value="C:ribosome"/>
    <property type="evidence" value="ECO:0007669"/>
    <property type="project" value="UniProtKB-KW"/>
</dbReference>
<dbReference type="GO" id="GO:0019843">
    <property type="term" value="F:rRNA binding"/>
    <property type="evidence" value="ECO:0007669"/>
    <property type="project" value="UniProtKB-UniRule"/>
</dbReference>
<dbReference type="GO" id="GO:0003735">
    <property type="term" value="F:structural constituent of ribosome"/>
    <property type="evidence" value="ECO:0007669"/>
    <property type="project" value="InterPro"/>
</dbReference>
<dbReference type="GO" id="GO:0000027">
    <property type="term" value="P:ribosomal large subunit assembly"/>
    <property type="evidence" value="ECO:0007669"/>
    <property type="project" value="UniProtKB-UniRule"/>
</dbReference>
<dbReference type="GO" id="GO:0006412">
    <property type="term" value="P:translation"/>
    <property type="evidence" value="ECO:0007669"/>
    <property type="project" value="InterPro"/>
</dbReference>
<dbReference type="CDD" id="cd07026">
    <property type="entry name" value="Ribosomal_L20"/>
    <property type="match status" value="1"/>
</dbReference>
<dbReference type="FunFam" id="1.10.1900.20:FF:000001">
    <property type="entry name" value="50S ribosomal protein L20"/>
    <property type="match status" value="1"/>
</dbReference>
<dbReference type="Gene3D" id="1.10.1900.20">
    <property type="entry name" value="Ribosomal protein L20"/>
    <property type="match status" value="1"/>
</dbReference>
<dbReference type="HAMAP" id="MF_00382">
    <property type="entry name" value="Ribosomal_bL20"/>
    <property type="match status" value="1"/>
</dbReference>
<dbReference type="InterPro" id="IPR005813">
    <property type="entry name" value="Ribosomal_bL20"/>
</dbReference>
<dbReference type="InterPro" id="IPR049946">
    <property type="entry name" value="RIBOSOMAL_L20_CS"/>
</dbReference>
<dbReference type="InterPro" id="IPR035566">
    <property type="entry name" value="Ribosomal_protein_bL20_C"/>
</dbReference>
<dbReference type="NCBIfam" id="TIGR01032">
    <property type="entry name" value="rplT_bact"/>
    <property type="match status" value="1"/>
</dbReference>
<dbReference type="PANTHER" id="PTHR10986">
    <property type="entry name" value="39S RIBOSOMAL PROTEIN L20"/>
    <property type="match status" value="1"/>
</dbReference>
<dbReference type="Pfam" id="PF00453">
    <property type="entry name" value="Ribosomal_L20"/>
    <property type="match status" value="1"/>
</dbReference>
<dbReference type="SUPFAM" id="SSF74731">
    <property type="entry name" value="Ribosomal protein L20"/>
    <property type="match status" value="1"/>
</dbReference>
<dbReference type="PROSITE" id="PS00937">
    <property type="entry name" value="RIBOSOMAL_L20"/>
    <property type="match status" value="1"/>
</dbReference>
<gene>
    <name evidence="1" type="primary">rpl20</name>
</gene>
<keyword id="KW-0150">Chloroplast</keyword>
<keyword id="KW-0934">Plastid</keyword>
<keyword id="KW-0687">Ribonucleoprotein</keyword>
<keyword id="KW-0689">Ribosomal protein</keyword>
<keyword id="KW-0694">RNA-binding</keyword>
<keyword id="KW-0699">rRNA-binding</keyword>
<name>RK20_TRACE</name>
<proteinExistence type="inferred from homology"/>
<comment type="function">
    <text evidence="1">Binds directly to 23S ribosomal RNA and is necessary for the in vitro assembly process of the 50S ribosomal subunit. It is not involved in the protein synthesizing functions of that subunit.</text>
</comment>
<comment type="subcellular location">
    <subcellularLocation>
        <location>Plastid</location>
        <location>Chloroplast</location>
    </subcellularLocation>
</comment>
<comment type="similarity">
    <text evidence="1">Belongs to the bacterial ribosomal protein bL20 family.</text>
</comment>
<protein>
    <recommendedName>
        <fullName evidence="1">Large ribosomal subunit protein bL20c</fullName>
    </recommendedName>
    <alternativeName>
        <fullName evidence="2">50S ribosomal protein L20, chloroplastic</fullName>
    </alternativeName>
</protein>
<sequence length="128" mass="15026">MTRISRGYIARRRRRKTSLVVSSSGASLSKLITQQEIKALASSDRDRDRQKRDFRCLWITRINSVIREGWVSYSYSYSKFIHDLYKRQLLLNRKILAQIAIANKNFLYLISNQILKSEVNWKESAGVI</sequence>
<accession>A9QC39</accession>
<evidence type="ECO:0000255" key="1">
    <source>
        <dbReference type="HAMAP-Rule" id="MF_00382"/>
    </source>
</evidence>
<evidence type="ECO:0000305" key="2"/>
<reference key="1">
    <citation type="journal article" date="2007" name="Proc. Natl. Acad. Sci. U.S.A.">
        <title>Analysis of 81 genes from 64 plastid genomes resolves relationships in angiosperms and identifies genome-scale evolutionary patterns.</title>
        <authorList>
            <person name="Jansen R.K."/>
            <person name="Cai Z."/>
            <person name="Raubeson L.A."/>
            <person name="Daniell H."/>
            <person name="dePamphilis C.W."/>
            <person name="Leebens-Mack J."/>
            <person name="Muller K.F."/>
            <person name="Guisinger-Bellian M."/>
            <person name="Haberle R.C."/>
            <person name="Hansen A.K."/>
            <person name="Chumley T.W."/>
            <person name="Lee S.B."/>
            <person name="Peery R."/>
            <person name="McNeal J.R."/>
            <person name="Kuehl J.V."/>
            <person name="Boore J.L."/>
        </authorList>
    </citation>
    <scope>NUCLEOTIDE SEQUENCE [GENOMIC DNA]</scope>
</reference>
<reference key="2">
    <citation type="journal article" date="2008" name="J. Mol. Evol.">
        <title>Extensive rearrangements in the chloroplast genome of Trachelium caeruleum are associated with repeats and tRNA genes.</title>
        <authorList>
            <person name="Haberle R.C."/>
            <person name="Fourcade H.M."/>
            <person name="Boore J.L."/>
            <person name="Jansen R.K."/>
        </authorList>
    </citation>
    <scope>NUCLEOTIDE SEQUENCE [LARGE SCALE GENOMIC DNA]</scope>
</reference>
<geneLocation type="chloroplast"/>